<sequence length="423" mass="45286">MDTVSRQLFEKAQAVIPGGVNSPVRACHNVDSQPLFIAEAHGCHLTDVDGRQYIDFVLSWGPMILGHDEPSVTRAVCDAAHRGTSYGAPCPDEVLLAEAVVAAMPSLEMVRMVNSGTEATMSALRLARAATRRDKVLKFVGCYHGHADPFLAAAGSGLATFSIPGTPGVPAAVVADTLLAPYNDLEAVKECFARHGESIAAIIVEPVAANMGLVLPKPGFLEGLRAICDQYESLLIFDEVITGFRAAFGGAQARFKVDPDLTTFGKIIGGGLPVGAFGGKRRYMELIAPRGGVYQAGTLSGNPLAMAAGLATLGILRKADYDGLENRTRAFAYSMRDIIAAKGVPLQMPTLASMFCPYFSEHEVTDFADAQKCDQKLFTSFYKQMRAQGIYLAPSGYETGMVSFAHTDEDFNRALDAARKVMF</sequence>
<gene>
    <name evidence="1" type="primary">hemL</name>
    <name type="ordered locus">Ddes_2017</name>
</gene>
<comment type="catalytic activity">
    <reaction evidence="1">
        <text>(S)-4-amino-5-oxopentanoate = 5-aminolevulinate</text>
        <dbReference type="Rhea" id="RHEA:14265"/>
        <dbReference type="ChEBI" id="CHEBI:57501"/>
        <dbReference type="ChEBI" id="CHEBI:356416"/>
        <dbReference type="EC" id="5.4.3.8"/>
    </reaction>
</comment>
<comment type="cofactor">
    <cofactor evidence="1">
        <name>pyridoxal 5'-phosphate</name>
        <dbReference type="ChEBI" id="CHEBI:597326"/>
    </cofactor>
</comment>
<comment type="pathway">
    <text evidence="1">Porphyrin-containing compound metabolism; protoporphyrin-IX biosynthesis; 5-aminolevulinate from L-glutamyl-tRNA(Glu): step 2/2.</text>
</comment>
<comment type="subunit">
    <text evidence="1">Homodimer.</text>
</comment>
<comment type="subcellular location">
    <subcellularLocation>
        <location evidence="1">Cytoplasm</location>
    </subcellularLocation>
</comment>
<comment type="similarity">
    <text evidence="1">Belongs to the class-III pyridoxal-phosphate-dependent aminotransferase family. HemL subfamily.</text>
</comment>
<feature type="chain" id="PRO_0000382311" description="Glutamate-1-semialdehyde 2,1-aminomutase">
    <location>
        <begin position="1"/>
        <end position="423"/>
    </location>
</feature>
<feature type="modified residue" description="N6-(pyridoxal phosphate)lysine" evidence="1">
    <location>
        <position position="266"/>
    </location>
</feature>
<accession>B8J3A3</accession>
<keyword id="KW-0963">Cytoplasm</keyword>
<keyword id="KW-0413">Isomerase</keyword>
<keyword id="KW-0627">Porphyrin biosynthesis</keyword>
<keyword id="KW-0663">Pyridoxal phosphate</keyword>
<protein>
    <recommendedName>
        <fullName evidence="1">Glutamate-1-semialdehyde 2,1-aminomutase</fullName>
        <shortName evidence="1">GSA</shortName>
        <ecNumber evidence="1">5.4.3.8</ecNumber>
    </recommendedName>
    <alternativeName>
        <fullName evidence="1">Glutamate-1-semialdehyde aminotransferase</fullName>
        <shortName evidence="1">GSA-AT</shortName>
    </alternativeName>
</protein>
<name>GSA_DESDA</name>
<reference key="1">
    <citation type="submission" date="2009-01" db="EMBL/GenBank/DDBJ databases">
        <title>Complete sequence of Desulfovibrio desulfuricans subsp. desulfuricans str. ATCC 27774.</title>
        <authorList>
            <consortium name="US DOE Joint Genome Institute"/>
            <person name="Lucas S."/>
            <person name="Copeland A."/>
            <person name="Lapidus A."/>
            <person name="Glavina del Rio T."/>
            <person name="Tice H."/>
            <person name="Bruce D."/>
            <person name="Goodwin L."/>
            <person name="Pitluck S."/>
            <person name="Sims D."/>
            <person name="Lu M."/>
            <person name="Kiss H."/>
            <person name="Meineke L."/>
            <person name="Brettin T."/>
            <person name="Detter J.C."/>
            <person name="Han C."/>
            <person name="Larimer F."/>
            <person name="Land M."/>
            <person name="Hauser L."/>
            <person name="Kyrpides N."/>
            <person name="Ovchinnikova G."/>
            <person name="Hazen T.C."/>
        </authorList>
    </citation>
    <scope>NUCLEOTIDE SEQUENCE [LARGE SCALE GENOMIC DNA]</scope>
    <source>
        <strain>ATCC 27774 / DSM 6949 / MB</strain>
    </source>
</reference>
<proteinExistence type="inferred from homology"/>
<dbReference type="EC" id="5.4.3.8" evidence="1"/>
<dbReference type="EMBL" id="CP001358">
    <property type="protein sequence ID" value="ACL49913.1"/>
    <property type="molecule type" value="Genomic_DNA"/>
</dbReference>
<dbReference type="SMR" id="B8J3A3"/>
<dbReference type="STRING" id="525146.Ddes_2017"/>
<dbReference type="KEGG" id="dds:Ddes_2017"/>
<dbReference type="eggNOG" id="COG0001">
    <property type="taxonomic scope" value="Bacteria"/>
</dbReference>
<dbReference type="HOGENOM" id="CLU_016922_1_5_7"/>
<dbReference type="UniPathway" id="UPA00251">
    <property type="reaction ID" value="UER00317"/>
</dbReference>
<dbReference type="GO" id="GO:0005737">
    <property type="term" value="C:cytoplasm"/>
    <property type="evidence" value="ECO:0007669"/>
    <property type="project" value="UniProtKB-SubCell"/>
</dbReference>
<dbReference type="GO" id="GO:0042286">
    <property type="term" value="F:glutamate-1-semialdehyde 2,1-aminomutase activity"/>
    <property type="evidence" value="ECO:0007669"/>
    <property type="project" value="UniProtKB-UniRule"/>
</dbReference>
<dbReference type="GO" id="GO:0030170">
    <property type="term" value="F:pyridoxal phosphate binding"/>
    <property type="evidence" value="ECO:0007669"/>
    <property type="project" value="InterPro"/>
</dbReference>
<dbReference type="GO" id="GO:0008483">
    <property type="term" value="F:transaminase activity"/>
    <property type="evidence" value="ECO:0007669"/>
    <property type="project" value="InterPro"/>
</dbReference>
<dbReference type="GO" id="GO:0006782">
    <property type="term" value="P:protoporphyrinogen IX biosynthetic process"/>
    <property type="evidence" value="ECO:0007669"/>
    <property type="project" value="UniProtKB-UniRule"/>
</dbReference>
<dbReference type="CDD" id="cd00610">
    <property type="entry name" value="OAT_like"/>
    <property type="match status" value="1"/>
</dbReference>
<dbReference type="FunFam" id="3.40.640.10:FF:000021">
    <property type="entry name" value="Glutamate-1-semialdehyde 2,1-aminomutase"/>
    <property type="match status" value="1"/>
</dbReference>
<dbReference type="Gene3D" id="3.90.1150.10">
    <property type="entry name" value="Aspartate Aminotransferase, domain 1"/>
    <property type="match status" value="1"/>
</dbReference>
<dbReference type="Gene3D" id="3.40.640.10">
    <property type="entry name" value="Type I PLP-dependent aspartate aminotransferase-like (Major domain)"/>
    <property type="match status" value="1"/>
</dbReference>
<dbReference type="HAMAP" id="MF_00375">
    <property type="entry name" value="HemL_aminotrans_3"/>
    <property type="match status" value="1"/>
</dbReference>
<dbReference type="InterPro" id="IPR004639">
    <property type="entry name" value="4pyrrol_synth_GluAld_NH2Trfase"/>
</dbReference>
<dbReference type="InterPro" id="IPR005814">
    <property type="entry name" value="Aminotrans_3"/>
</dbReference>
<dbReference type="InterPro" id="IPR049704">
    <property type="entry name" value="Aminotrans_3_PPA_site"/>
</dbReference>
<dbReference type="InterPro" id="IPR015424">
    <property type="entry name" value="PyrdxlP-dep_Trfase"/>
</dbReference>
<dbReference type="InterPro" id="IPR015421">
    <property type="entry name" value="PyrdxlP-dep_Trfase_major"/>
</dbReference>
<dbReference type="InterPro" id="IPR015422">
    <property type="entry name" value="PyrdxlP-dep_Trfase_small"/>
</dbReference>
<dbReference type="NCBIfam" id="TIGR00713">
    <property type="entry name" value="hemL"/>
    <property type="match status" value="1"/>
</dbReference>
<dbReference type="NCBIfam" id="NF000818">
    <property type="entry name" value="PRK00062.1"/>
    <property type="match status" value="1"/>
</dbReference>
<dbReference type="PANTHER" id="PTHR43713">
    <property type="entry name" value="GLUTAMATE-1-SEMIALDEHYDE 2,1-AMINOMUTASE"/>
    <property type="match status" value="1"/>
</dbReference>
<dbReference type="PANTHER" id="PTHR43713:SF3">
    <property type="entry name" value="GLUTAMATE-1-SEMIALDEHYDE 2,1-AMINOMUTASE 1, CHLOROPLASTIC-RELATED"/>
    <property type="match status" value="1"/>
</dbReference>
<dbReference type="Pfam" id="PF00202">
    <property type="entry name" value="Aminotran_3"/>
    <property type="match status" value="1"/>
</dbReference>
<dbReference type="SUPFAM" id="SSF53383">
    <property type="entry name" value="PLP-dependent transferases"/>
    <property type="match status" value="1"/>
</dbReference>
<dbReference type="PROSITE" id="PS00600">
    <property type="entry name" value="AA_TRANSFER_CLASS_3"/>
    <property type="match status" value="1"/>
</dbReference>
<organism>
    <name type="scientific">Desulfovibrio desulfuricans (strain ATCC 27774 / DSM 6949 / MB)</name>
    <dbReference type="NCBI Taxonomy" id="525146"/>
    <lineage>
        <taxon>Bacteria</taxon>
        <taxon>Pseudomonadati</taxon>
        <taxon>Thermodesulfobacteriota</taxon>
        <taxon>Desulfovibrionia</taxon>
        <taxon>Desulfovibrionales</taxon>
        <taxon>Desulfovibrionaceae</taxon>
        <taxon>Desulfovibrio</taxon>
    </lineage>
</organism>
<evidence type="ECO:0000255" key="1">
    <source>
        <dbReference type="HAMAP-Rule" id="MF_00375"/>
    </source>
</evidence>